<keyword id="KW-0963">Cytoplasm</keyword>
<keyword id="KW-0489">Methyltransferase</keyword>
<keyword id="KW-1185">Reference proteome</keyword>
<keyword id="KW-0694">RNA-binding</keyword>
<keyword id="KW-0698">rRNA processing</keyword>
<keyword id="KW-0949">S-adenosyl-L-methionine</keyword>
<keyword id="KW-0808">Transferase</keyword>
<evidence type="ECO:0000255" key="1">
    <source>
        <dbReference type="HAMAP-Rule" id="MF_00607"/>
    </source>
</evidence>
<protein>
    <recommendedName>
        <fullName evidence="1">Ribosomal RNA small subunit methyltransferase A</fullName>
        <ecNumber evidence="1">2.1.1.182</ecNumber>
    </recommendedName>
    <alternativeName>
        <fullName evidence="1">16S rRNA (adenine(1518)-N(6)/adenine(1519)-N(6))-dimethyltransferase</fullName>
    </alternativeName>
    <alternativeName>
        <fullName evidence="1">16S rRNA dimethyladenosine transferase</fullName>
    </alternativeName>
    <alternativeName>
        <fullName evidence="1">16S rRNA dimethylase</fullName>
    </alternativeName>
    <alternativeName>
        <fullName evidence="1">S-adenosylmethionine-6-N', N'-adenosyl(rRNA) dimethyltransferase</fullName>
    </alternativeName>
</protein>
<feature type="chain" id="PRO_1000212257" description="Ribosomal RNA small subunit methyltransferase A">
    <location>
        <begin position="1"/>
        <end position="268"/>
    </location>
</feature>
<feature type="binding site" evidence="1">
    <location>
        <position position="19"/>
    </location>
    <ligand>
        <name>S-adenosyl-L-methionine</name>
        <dbReference type="ChEBI" id="CHEBI:59789"/>
    </ligand>
</feature>
<feature type="binding site" evidence="1">
    <location>
        <position position="21"/>
    </location>
    <ligand>
        <name>S-adenosyl-L-methionine</name>
        <dbReference type="ChEBI" id="CHEBI:59789"/>
    </ligand>
</feature>
<feature type="binding site" evidence="1">
    <location>
        <position position="46"/>
    </location>
    <ligand>
        <name>S-adenosyl-L-methionine</name>
        <dbReference type="ChEBI" id="CHEBI:59789"/>
    </ligand>
</feature>
<feature type="binding site" evidence="1">
    <location>
        <position position="67"/>
    </location>
    <ligand>
        <name>S-adenosyl-L-methionine</name>
        <dbReference type="ChEBI" id="CHEBI:59789"/>
    </ligand>
</feature>
<feature type="binding site" evidence="1">
    <location>
        <position position="92"/>
    </location>
    <ligand>
        <name>S-adenosyl-L-methionine</name>
        <dbReference type="ChEBI" id="CHEBI:59789"/>
    </ligand>
</feature>
<feature type="binding site" evidence="1">
    <location>
        <position position="113"/>
    </location>
    <ligand>
        <name>S-adenosyl-L-methionine</name>
        <dbReference type="ChEBI" id="CHEBI:59789"/>
    </ligand>
</feature>
<organism>
    <name type="scientific">Tolumonas auensis (strain DSM 9187 / NBRC 110442 / TA 4)</name>
    <dbReference type="NCBI Taxonomy" id="595494"/>
    <lineage>
        <taxon>Bacteria</taxon>
        <taxon>Pseudomonadati</taxon>
        <taxon>Pseudomonadota</taxon>
        <taxon>Gammaproteobacteria</taxon>
        <taxon>Aeromonadales</taxon>
        <taxon>Aeromonadaceae</taxon>
        <taxon>Tolumonas</taxon>
    </lineage>
</organism>
<proteinExistence type="inferred from homology"/>
<sequence length="268" mass="30811">MINDNVHLGHRARKRFGQNFLHDQYTIDSIVSAIAPRQNDVMVEIGPGLGALTEPVCDQIDKLHVVELDRDLAARLREHPRLKDKLIVHEADAMKFNFDELAQPGRPLRIFGNLPYNISTPLIFHLLEKSQYITDMYFMLQKEVVERLAAGPNSKDYGRLTVMTQYYCQVMPVLEVGPHAFKPAPKVNSAVVRLAPWKKRPYEALNIADLQRVCQEGFGQRRKTIRNTFRSFITAEQLEEIDINPNLRPENLTLAQFVSIANWLTTHR</sequence>
<accession>C4L9L4</accession>
<reference key="1">
    <citation type="submission" date="2009-05" db="EMBL/GenBank/DDBJ databases">
        <title>Complete sequence of Tolumonas auensis DSM 9187.</title>
        <authorList>
            <consortium name="US DOE Joint Genome Institute"/>
            <person name="Lucas S."/>
            <person name="Copeland A."/>
            <person name="Lapidus A."/>
            <person name="Glavina del Rio T."/>
            <person name="Tice H."/>
            <person name="Bruce D."/>
            <person name="Goodwin L."/>
            <person name="Pitluck S."/>
            <person name="Chertkov O."/>
            <person name="Brettin T."/>
            <person name="Detter J.C."/>
            <person name="Han C."/>
            <person name="Larimer F."/>
            <person name="Land M."/>
            <person name="Hauser L."/>
            <person name="Kyrpides N."/>
            <person name="Mikhailova N."/>
            <person name="Spring S."/>
            <person name="Beller H."/>
        </authorList>
    </citation>
    <scope>NUCLEOTIDE SEQUENCE [LARGE SCALE GENOMIC DNA]</scope>
    <source>
        <strain>DSM 9187 / NBRC 110442 / TA 4</strain>
    </source>
</reference>
<gene>
    <name evidence="1" type="primary">rsmA</name>
    <name evidence="1" type="synonym">ksgA</name>
    <name type="ordered locus">Tola_2370</name>
</gene>
<dbReference type="EC" id="2.1.1.182" evidence="1"/>
<dbReference type="EMBL" id="CP001616">
    <property type="protein sequence ID" value="ACQ93967.1"/>
    <property type="molecule type" value="Genomic_DNA"/>
</dbReference>
<dbReference type="RefSeq" id="WP_015879435.1">
    <property type="nucleotide sequence ID" value="NC_012691.1"/>
</dbReference>
<dbReference type="SMR" id="C4L9L4"/>
<dbReference type="STRING" id="595494.Tola_2370"/>
<dbReference type="KEGG" id="tau:Tola_2370"/>
<dbReference type="eggNOG" id="COG0030">
    <property type="taxonomic scope" value="Bacteria"/>
</dbReference>
<dbReference type="HOGENOM" id="CLU_041220_0_1_6"/>
<dbReference type="OrthoDB" id="9814755at2"/>
<dbReference type="Proteomes" id="UP000009073">
    <property type="component" value="Chromosome"/>
</dbReference>
<dbReference type="GO" id="GO:0005829">
    <property type="term" value="C:cytosol"/>
    <property type="evidence" value="ECO:0007669"/>
    <property type="project" value="TreeGrafter"/>
</dbReference>
<dbReference type="GO" id="GO:0052908">
    <property type="term" value="F:16S rRNA (adenine(1518)-N(6)/adenine(1519)-N(6))-dimethyltransferase activity"/>
    <property type="evidence" value="ECO:0007669"/>
    <property type="project" value="UniProtKB-EC"/>
</dbReference>
<dbReference type="GO" id="GO:0003723">
    <property type="term" value="F:RNA binding"/>
    <property type="evidence" value="ECO:0007669"/>
    <property type="project" value="UniProtKB-KW"/>
</dbReference>
<dbReference type="FunFam" id="1.10.8.100:FF:000001">
    <property type="entry name" value="Ribosomal RNA small subunit methyltransferase A"/>
    <property type="match status" value="1"/>
</dbReference>
<dbReference type="FunFam" id="3.40.50.150:FF:000006">
    <property type="entry name" value="Ribosomal RNA small subunit methyltransferase A"/>
    <property type="match status" value="1"/>
</dbReference>
<dbReference type="Gene3D" id="1.10.8.100">
    <property type="entry name" value="Ribosomal RNA adenine dimethylase-like, domain 2"/>
    <property type="match status" value="1"/>
</dbReference>
<dbReference type="Gene3D" id="3.40.50.150">
    <property type="entry name" value="Vaccinia Virus protein VP39"/>
    <property type="match status" value="1"/>
</dbReference>
<dbReference type="HAMAP" id="MF_00607">
    <property type="entry name" value="16SrRNA_methyltr_A"/>
    <property type="match status" value="1"/>
</dbReference>
<dbReference type="InterPro" id="IPR001737">
    <property type="entry name" value="KsgA/Erm"/>
</dbReference>
<dbReference type="InterPro" id="IPR023165">
    <property type="entry name" value="rRNA_Ade_diMease-like_C"/>
</dbReference>
<dbReference type="InterPro" id="IPR020596">
    <property type="entry name" value="rRNA_Ade_Mease_Trfase_CS"/>
</dbReference>
<dbReference type="InterPro" id="IPR020598">
    <property type="entry name" value="rRNA_Ade_methylase_Trfase_N"/>
</dbReference>
<dbReference type="InterPro" id="IPR011530">
    <property type="entry name" value="rRNA_adenine_dimethylase"/>
</dbReference>
<dbReference type="InterPro" id="IPR029063">
    <property type="entry name" value="SAM-dependent_MTases_sf"/>
</dbReference>
<dbReference type="NCBIfam" id="TIGR00755">
    <property type="entry name" value="ksgA"/>
    <property type="match status" value="1"/>
</dbReference>
<dbReference type="PANTHER" id="PTHR11727">
    <property type="entry name" value="DIMETHYLADENOSINE TRANSFERASE"/>
    <property type="match status" value="1"/>
</dbReference>
<dbReference type="PANTHER" id="PTHR11727:SF7">
    <property type="entry name" value="DIMETHYLADENOSINE TRANSFERASE-RELATED"/>
    <property type="match status" value="1"/>
</dbReference>
<dbReference type="Pfam" id="PF00398">
    <property type="entry name" value="RrnaAD"/>
    <property type="match status" value="1"/>
</dbReference>
<dbReference type="SMART" id="SM00650">
    <property type="entry name" value="rADc"/>
    <property type="match status" value="1"/>
</dbReference>
<dbReference type="SUPFAM" id="SSF53335">
    <property type="entry name" value="S-adenosyl-L-methionine-dependent methyltransferases"/>
    <property type="match status" value="1"/>
</dbReference>
<dbReference type="PROSITE" id="PS01131">
    <property type="entry name" value="RRNA_A_DIMETH"/>
    <property type="match status" value="1"/>
</dbReference>
<dbReference type="PROSITE" id="PS51689">
    <property type="entry name" value="SAM_RNA_A_N6_MT"/>
    <property type="match status" value="1"/>
</dbReference>
<name>RSMA_TOLAT</name>
<comment type="function">
    <text evidence="1">Specifically dimethylates two adjacent adenosines (A1518 and A1519) in the loop of a conserved hairpin near the 3'-end of 16S rRNA in the 30S particle. May play a critical role in biogenesis of 30S subunits.</text>
</comment>
<comment type="catalytic activity">
    <reaction evidence="1">
        <text>adenosine(1518)/adenosine(1519) in 16S rRNA + 4 S-adenosyl-L-methionine = N(6)-dimethyladenosine(1518)/N(6)-dimethyladenosine(1519) in 16S rRNA + 4 S-adenosyl-L-homocysteine + 4 H(+)</text>
        <dbReference type="Rhea" id="RHEA:19609"/>
        <dbReference type="Rhea" id="RHEA-COMP:10232"/>
        <dbReference type="Rhea" id="RHEA-COMP:10233"/>
        <dbReference type="ChEBI" id="CHEBI:15378"/>
        <dbReference type="ChEBI" id="CHEBI:57856"/>
        <dbReference type="ChEBI" id="CHEBI:59789"/>
        <dbReference type="ChEBI" id="CHEBI:74411"/>
        <dbReference type="ChEBI" id="CHEBI:74493"/>
        <dbReference type="EC" id="2.1.1.182"/>
    </reaction>
</comment>
<comment type="subcellular location">
    <subcellularLocation>
        <location evidence="1">Cytoplasm</location>
    </subcellularLocation>
</comment>
<comment type="similarity">
    <text evidence="1">Belongs to the class I-like SAM-binding methyltransferase superfamily. rRNA adenine N(6)-methyltransferase family. RsmA subfamily.</text>
</comment>